<comment type="catalytic activity">
    <reaction evidence="1">
        <text>tRNA(Phe) + L-phenylalanine + ATP = L-phenylalanyl-tRNA(Phe) + AMP + diphosphate + H(+)</text>
        <dbReference type="Rhea" id="RHEA:19413"/>
        <dbReference type="Rhea" id="RHEA-COMP:9668"/>
        <dbReference type="Rhea" id="RHEA-COMP:9699"/>
        <dbReference type="ChEBI" id="CHEBI:15378"/>
        <dbReference type="ChEBI" id="CHEBI:30616"/>
        <dbReference type="ChEBI" id="CHEBI:33019"/>
        <dbReference type="ChEBI" id="CHEBI:58095"/>
        <dbReference type="ChEBI" id="CHEBI:78442"/>
        <dbReference type="ChEBI" id="CHEBI:78531"/>
        <dbReference type="ChEBI" id="CHEBI:456215"/>
        <dbReference type="EC" id="6.1.1.20"/>
    </reaction>
</comment>
<comment type="cofactor">
    <cofactor evidence="1">
        <name>Mg(2+)</name>
        <dbReference type="ChEBI" id="CHEBI:18420"/>
    </cofactor>
    <text evidence="1">Binds 2 magnesium ions per tetramer.</text>
</comment>
<comment type="subunit">
    <text evidence="1">Tetramer of two alpha and two beta subunits.</text>
</comment>
<comment type="subcellular location">
    <subcellularLocation>
        <location evidence="1">Cytoplasm</location>
    </subcellularLocation>
</comment>
<comment type="similarity">
    <text evidence="1">Belongs to the class-II aminoacyl-tRNA synthetase family. Phe-tRNA synthetase alpha subunit type 1 subfamily.</text>
</comment>
<feature type="chain" id="PRO_1000114923" description="Phenylalanine--tRNA ligase alpha subunit">
    <location>
        <begin position="1"/>
        <end position="344"/>
    </location>
</feature>
<feature type="binding site" evidence="1">
    <location>
        <position position="255"/>
    </location>
    <ligand>
        <name>Mg(2+)</name>
        <dbReference type="ChEBI" id="CHEBI:18420"/>
        <note>shared with beta subunit</note>
    </ligand>
</feature>
<sequence length="344" mass="39312">MDIKAQLLQLKEEIKKEVQDIFDEKVLNEIKVKYLGKKGLITSVLKSLGSLSPEERKEVGQLANSIKEFLEEALKAKQEEIEKKKLEEILRKERLDISLPAEWFEPSASHPVLTTLKEITEIFKSMGFTVESGPEVEYEDYNFTMLNIPEHHPARDMQDTFYTSNGMLLRTHTSPVQIRSMLKKKPPIAIVAPGRVYRKDMDPTHSPMFHQIEGLMVDKNVSFKDLKGILKIFLENIFGKDIPIRFRPSYFPFTEPSAEVDVGCTVCKGKGCRVCKNTGWLEILGCGMVDPNVFKAVGIGPEDYTGFAFGLGIERIAMLRYQITDIRLLFTNDLRFNLQFRGIE</sequence>
<name>SYFA_SULSY</name>
<gene>
    <name evidence="1" type="primary">pheS</name>
    <name type="ordered locus">SYO3AOP1_1684</name>
</gene>
<protein>
    <recommendedName>
        <fullName evidence="1">Phenylalanine--tRNA ligase alpha subunit</fullName>
        <ecNumber evidence="1">6.1.1.20</ecNumber>
    </recommendedName>
    <alternativeName>
        <fullName evidence="1">Phenylalanyl-tRNA synthetase alpha subunit</fullName>
        <shortName evidence="1">PheRS</shortName>
    </alternativeName>
</protein>
<accession>B2V6V0</accession>
<proteinExistence type="inferred from homology"/>
<keyword id="KW-0030">Aminoacyl-tRNA synthetase</keyword>
<keyword id="KW-0067">ATP-binding</keyword>
<keyword id="KW-0963">Cytoplasm</keyword>
<keyword id="KW-0436">Ligase</keyword>
<keyword id="KW-0460">Magnesium</keyword>
<keyword id="KW-0479">Metal-binding</keyword>
<keyword id="KW-0547">Nucleotide-binding</keyword>
<keyword id="KW-0648">Protein biosynthesis</keyword>
<dbReference type="EC" id="6.1.1.20" evidence="1"/>
<dbReference type="EMBL" id="CP001080">
    <property type="protein sequence ID" value="ACD67282.1"/>
    <property type="molecule type" value="Genomic_DNA"/>
</dbReference>
<dbReference type="RefSeq" id="WP_012460338.1">
    <property type="nucleotide sequence ID" value="NC_010730.1"/>
</dbReference>
<dbReference type="SMR" id="B2V6V0"/>
<dbReference type="STRING" id="436114.SYO3AOP1_1684"/>
<dbReference type="KEGG" id="sul:SYO3AOP1_1684"/>
<dbReference type="eggNOG" id="COG0016">
    <property type="taxonomic scope" value="Bacteria"/>
</dbReference>
<dbReference type="HOGENOM" id="CLU_025086_0_1_0"/>
<dbReference type="GO" id="GO:0005737">
    <property type="term" value="C:cytoplasm"/>
    <property type="evidence" value="ECO:0007669"/>
    <property type="project" value="UniProtKB-SubCell"/>
</dbReference>
<dbReference type="GO" id="GO:0005524">
    <property type="term" value="F:ATP binding"/>
    <property type="evidence" value="ECO:0007669"/>
    <property type="project" value="UniProtKB-UniRule"/>
</dbReference>
<dbReference type="GO" id="GO:0000287">
    <property type="term" value="F:magnesium ion binding"/>
    <property type="evidence" value="ECO:0007669"/>
    <property type="project" value="UniProtKB-UniRule"/>
</dbReference>
<dbReference type="GO" id="GO:0004826">
    <property type="term" value="F:phenylalanine-tRNA ligase activity"/>
    <property type="evidence" value="ECO:0007669"/>
    <property type="project" value="UniProtKB-UniRule"/>
</dbReference>
<dbReference type="GO" id="GO:0000049">
    <property type="term" value="F:tRNA binding"/>
    <property type="evidence" value="ECO:0007669"/>
    <property type="project" value="InterPro"/>
</dbReference>
<dbReference type="GO" id="GO:0006432">
    <property type="term" value="P:phenylalanyl-tRNA aminoacylation"/>
    <property type="evidence" value="ECO:0007669"/>
    <property type="project" value="UniProtKB-UniRule"/>
</dbReference>
<dbReference type="CDD" id="cd00496">
    <property type="entry name" value="PheRS_alpha_core"/>
    <property type="match status" value="1"/>
</dbReference>
<dbReference type="FunFam" id="3.30.930.10:FF:000003">
    <property type="entry name" value="Phenylalanine--tRNA ligase alpha subunit"/>
    <property type="match status" value="1"/>
</dbReference>
<dbReference type="Gene3D" id="3.30.930.10">
    <property type="entry name" value="Bira Bifunctional Protein, Domain 2"/>
    <property type="match status" value="1"/>
</dbReference>
<dbReference type="HAMAP" id="MF_00281">
    <property type="entry name" value="Phe_tRNA_synth_alpha1"/>
    <property type="match status" value="1"/>
</dbReference>
<dbReference type="InterPro" id="IPR006195">
    <property type="entry name" value="aa-tRNA-synth_II"/>
</dbReference>
<dbReference type="InterPro" id="IPR045864">
    <property type="entry name" value="aa-tRNA-synth_II/BPL/LPL"/>
</dbReference>
<dbReference type="InterPro" id="IPR004529">
    <property type="entry name" value="Phe-tRNA-synth_IIc_asu"/>
</dbReference>
<dbReference type="InterPro" id="IPR004188">
    <property type="entry name" value="Phe-tRNA_ligase_II_N"/>
</dbReference>
<dbReference type="InterPro" id="IPR022911">
    <property type="entry name" value="Phe_tRNA_ligase_alpha1_bac"/>
</dbReference>
<dbReference type="InterPro" id="IPR002319">
    <property type="entry name" value="Phenylalanyl-tRNA_Synthase"/>
</dbReference>
<dbReference type="InterPro" id="IPR010978">
    <property type="entry name" value="tRNA-bd_arm"/>
</dbReference>
<dbReference type="NCBIfam" id="TIGR00468">
    <property type="entry name" value="pheS"/>
    <property type="match status" value="1"/>
</dbReference>
<dbReference type="PANTHER" id="PTHR11538:SF41">
    <property type="entry name" value="PHENYLALANINE--TRNA LIGASE, MITOCHONDRIAL"/>
    <property type="match status" value="1"/>
</dbReference>
<dbReference type="PANTHER" id="PTHR11538">
    <property type="entry name" value="PHENYLALANYL-TRNA SYNTHETASE"/>
    <property type="match status" value="1"/>
</dbReference>
<dbReference type="Pfam" id="PF02912">
    <property type="entry name" value="Phe_tRNA-synt_N"/>
    <property type="match status" value="1"/>
</dbReference>
<dbReference type="Pfam" id="PF01409">
    <property type="entry name" value="tRNA-synt_2d"/>
    <property type="match status" value="1"/>
</dbReference>
<dbReference type="SUPFAM" id="SSF55681">
    <property type="entry name" value="Class II aaRS and biotin synthetases"/>
    <property type="match status" value="1"/>
</dbReference>
<dbReference type="SUPFAM" id="SSF46589">
    <property type="entry name" value="tRNA-binding arm"/>
    <property type="match status" value="1"/>
</dbReference>
<dbReference type="PROSITE" id="PS50862">
    <property type="entry name" value="AA_TRNA_LIGASE_II"/>
    <property type="match status" value="1"/>
</dbReference>
<reference key="1">
    <citation type="journal article" date="2009" name="J. Bacteriol.">
        <title>Complete and draft genome sequences of six members of the Aquificales.</title>
        <authorList>
            <person name="Reysenbach A.-L."/>
            <person name="Hamamura N."/>
            <person name="Podar M."/>
            <person name="Griffiths E."/>
            <person name="Ferreira S."/>
            <person name="Hochstein R."/>
            <person name="Heidelberg J."/>
            <person name="Johnson J."/>
            <person name="Mead D."/>
            <person name="Pohorille A."/>
            <person name="Sarmiento M."/>
            <person name="Schweighofer K."/>
            <person name="Seshadri R."/>
            <person name="Voytek M.A."/>
        </authorList>
    </citation>
    <scope>NUCLEOTIDE SEQUENCE [LARGE SCALE GENOMIC DNA]</scope>
    <source>
        <strain>YO3AOP1</strain>
    </source>
</reference>
<evidence type="ECO:0000255" key="1">
    <source>
        <dbReference type="HAMAP-Rule" id="MF_00281"/>
    </source>
</evidence>
<organism>
    <name type="scientific">Sulfurihydrogenibium sp. (strain YO3AOP1)</name>
    <dbReference type="NCBI Taxonomy" id="436114"/>
    <lineage>
        <taxon>Bacteria</taxon>
        <taxon>Pseudomonadati</taxon>
        <taxon>Aquificota</taxon>
        <taxon>Aquificia</taxon>
        <taxon>Aquificales</taxon>
        <taxon>Hydrogenothermaceae</taxon>
        <taxon>Sulfurihydrogenibium</taxon>
    </lineage>
</organism>